<proteinExistence type="inferred from homology"/>
<feature type="chain" id="PRO_0000187480" description="Large ribosomal subunit protein bL34">
    <location>
        <begin position="1"/>
        <end position="44"/>
    </location>
</feature>
<feature type="region of interest" description="Disordered" evidence="2">
    <location>
        <begin position="1"/>
        <end position="44"/>
    </location>
</feature>
<accession>Q5LY03</accession>
<organism>
    <name type="scientific">Streptococcus thermophilus (strain CNRZ 1066)</name>
    <dbReference type="NCBI Taxonomy" id="299768"/>
    <lineage>
        <taxon>Bacteria</taxon>
        <taxon>Bacillati</taxon>
        <taxon>Bacillota</taxon>
        <taxon>Bacilli</taxon>
        <taxon>Lactobacillales</taxon>
        <taxon>Streptococcaceae</taxon>
        <taxon>Streptococcus</taxon>
    </lineage>
</organism>
<sequence length="44" mass="5345">MKRTYQPSKIRRQRKHGFRHRMSTKNGRRVLAARRRKGRKVLAA</sequence>
<dbReference type="EMBL" id="CP000024">
    <property type="protein sequence ID" value="AAV63324.1"/>
    <property type="molecule type" value="Genomic_DNA"/>
</dbReference>
<dbReference type="RefSeq" id="WP_002953513.1">
    <property type="nucleotide sequence ID" value="NC_006449.1"/>
</dbReference>
<dbReference type="SMR" id="Q5LY03"/>
<dbReference type="GeneID" id="66899545"/>
<dbReference type="KEGG" id="stc:str1808"/>
<dbReference type="HOGENOM" id="CLU_129938_2_0_9"/>
<dbReference type="GO" id="GO:1990904">
    <property type="term" value="C:ribonucleoprotein complex"/>
    <property type="evidence" value="ECO:0007669"/>
    <property type="project" value="UniProtKB-KW"/>
</dbReference>
<dbReference type="GO" id="GO:0005840">
    <property type="term" value="C:ribosome"/>
    <property type="evidence" value="ECO:0007669"/>
    <property type="project" value="UniProtKB-KW"/>
</dbReference>
<dbReference type="GO" id="GO:0003735">
    <property type="term" value="F:structural constituent of ribosome"/>
    <property type="evidence" value="ECO:0007669"/>
    <property type="project" value="InterPro"/>
</dbReference>
<dbReference type="GO" id="GO:0006412">
    <property type="term" value="P:translation"/>
    <property type="evidence" value="ECO:0007669"/>
    <property type="project" value="UniProtKB-UniRule"/>
</dbReference>
<dbReference type="FunFam" id="1.10.287.3980:FF:000001">
    <property type="entry name" value="Mitochondrial ribosomal protein L34"/>
    <property type="match status" value="1"/>
</dbReference>
<dbReference type="Gene3D" id="1.10.287.3980">
    <property type="match status" value="1"/>
</dbReference>
<dbReference type="HAMAP" id="MF_00391">
    <property type="entry name" value="Ribosomal_bL34"/>
    <property type="match status" value="1"/>
</dbReference>
<dbReference type="InterPro" id="IPR000271">
    <property type="entry name" value="Ribosomal_bL34"/>
</dbReference>
<dbReference type="InterPro" id="IPR020939">
    <property type="entry name" value="Ribosomal_bL34_CS"/>
</dbReference>
<dbReference type="NCBIfam" id="TIGR01030">
    <property type="entry name" value="rpmH_bact"/>
    <property type="match status" value="1"/>
</dbReference>
<dbReference type="PANTHER" id="PTHR14503:SF4">
    <property type="entry name" value="LARGE RIBOSOMAL SUBUNIT PROTEIN BL34M"/>
    <property type="match status" value="1"/>
</dbReference>
<dbReference type="PANTHER" id="PTHR14503">
    <property type="entry name" value="MITOCHONDRIAL RIBOSOMAL PROTEIN 34 FAMILY MEMBER"/>
    <property type="match status" value="1"/>
</dbReference>
<dbReference type="Pfam" id="PF00468">
    <property type="entry name" value="Ribosomal_L34"/>
    <property type="match status" value="1"/>
</dbReference>
<dbReference type="PROSITE" id="PS00784">
    <property type="entry name" value="RIBOSOMAL_L34"/>
    <property type="match status" value="1"/>
</dbReference>
<comment type="similarity">
    <text evidence="1">Belongs to the bacterial ribosomal protein bL34 family.</text>
</comment>
<reference key="1">
    <citation type="journal article" date="2004" name="Nat. Biotechnol.">
        <title>Complete sequence and comparative genome analysis of the dairy bacterium Streptococcus thermophilus.</title>
        <authorList>
            <person name="Bolotin A."/>
            <person name="Quinquis B."/>
            <person name="Renault P."/>
            <person name="Sorokin A."/>
            <person name="Ehrlich S.D."/>
            <person name="Kulakauskas S."/>
            <person name="Lapidus A."/>
            <person name="Goltsman E."/>
            <person name="Mazur M."/>
            <person name="Pusch G.D."/>
            <person name="Fonstein M."/>
            <person name="Overbeek R."/>
            <person name="Kyprides N."/>
            <person name="Purnelle B."/>
            <person name="Prozzi D."/>
            <person name="Ngui K."/>
            <person name="Masuy D."/>
            <person name="Hancy F."/>
            <person name="Burteau S."/>
            <person name="Boutry M."/>
            <person name="Delcour J."/>
            <person name="Goffeau A."/>
            <person name="Hols P."/>
        </authorList>
    </citation>
    <scope>NUCLEOTIDE SEQUENCE [LARGE SCALE GENOMIC DNA]</scope>
    <source>
        <strain>CNRZ 1066</strain>
    </source>
</reference>
<gene>
    <name evidence="1" type="primary">rpmH</name>
    <name type="ordered locus">str1808</name>
</gene>
<keyword id="KW-0687">Ribonucleoprotein</keyword>
<keyword id="KW-0689">Ribosomal protein</keyword>
<name>RL34_STRT1</name>
<evidence type="ECO:0000255" key="1">
    <source>
        <dbReference type="HAMAP-Rule" id="MF_00391"/>
    </source>
</evidence>
<evidence type="ECO:0000256" key="2">
    <source>
        <dbReference type="SAM" id="MobiDB-lite"/>
    </source>
</evidence>
<evidence type="ECO:0000305" key="3"/>
<protein>
    <recommendedName>
        <fullName evidence="1">Large ribosomal subunit protein bL34</fullName>
    </recommendedName>
    <alternativeName>
        <fullName evidence="3">50S ribosomal protein L34</fullName>
    </alternativeName>
</protein>